<feature type="chain" id="PRO_0000308747" description="Increased rDNA silencing protein 4">
    <location>
        <begin position="1"/>
        <end position="744"/>
    </location>
</feature>
<feature type="domain" description="EH" evidence="2">
    <location>
        <begin position="617"/>
        <end position="706"/>
    </location>
</feature>
<feature type="region of interest" description="Disordered" evidence="3">
    <location>
        <begin position="1"/>
        <end position="61"/>
    </location>
</feature>
<feature type="region of interest" description="Disordered" evidence="3">
    <location>
        <begin position="76"/>
        <end position="98"/>
    </location>
</feature>
<feature type="region of interest" description="Disordered" evidence="3">
    <location>
        <begin position="187"/>
        <end position="237"/>
    </location>
</feature>
<feature type="region of interest" description="Disordered" evidence="3">
    <location>
        <begin position="260"/>
        <end position="282"/>
    </location>
</feature>
<feature type="region of interest" description="Disordered" evidence="3">
    <location>
        <begin position="302"/>
        <end position="350"/>
    </location>
</feature>
<feature type="region of interest" description="Disordered" evidence="3">
    <location>
        <begin position="366"/>
        <end position="412"/>
    </location>
</feature>
<feature type="region of interest" description="Disordered" evidence="3">
    <location>
        <begin position="522"/>
        <end position="574"/>
    </location>
</feature>
<feature type="compositionally biased region" description="Polar residues" evidence="3">
    <location>
        <begin position="198"/>
        <end position="211"/>
    </location>
</feature>
<feature type="compositionally biased region" description="Polar residues" evidence="3">
    <location>
        <begin position="260"/>
        <end position="273"/>
    </location>
</feature>
<feature type="compositionally biased region" description="Polar residues" evidence="3">
    <location>
        <begin position="378"/>
        <end position="390"/>
    </location>
</feature>
<feature type="compositionally biased region" description="Acidic residues" evidence="3">
    <location>
        <begin position="400"/>
        <end position="412"/>
    </location>
</feature>
<feature type="compositionally biased region" description="Acidic residues" evidence="3">
    <location>
        <begin position="537"/>
        <end position="546"/>
    </location>
</feature>
<feature type="compositionally biased region" description="Basic residues" evidence="3">
    <location>
        <begin position="556"/>
        <end position="572"/>
    </location>
</feature>
<proteinExistence type="inferred from homology"/>
<organism>
    <name type="scientific">Eremothecium gossypii (strain ATCC 10895 / CBS 109.51 / FGSC 9923 / NRRL Y-1056)</name>
    <name type="common">Yeast</name>
    <name type="synonym">Ashbya gossypii</name>
    <dbReference type="NCBI Taxonomy" id="284811"/>
    <lineage>
        <taxon>Eukaryota</taxon>
        <taxon>Fungi</taxon>
        <taxon>Dikarya</taxon>
        <taxon>Ascomycota</taxon>
        <taxon>Saccharomycotina</taxon>
        <taxon>Saccharomycetes</taxon>
        <taxon>Saccharomycetales</taxon>
        <taxon>Saccharomycetaceae</taxon>
        <taxon>Eremothecium</taxon>
    </lineage>
</organism>
<sequence>MRFRSERQSKILSASNGEAGEVHKASLKAAQATFKKHADGARVNPRVPSAPGNSKGSMDGLVDPIAGLQLDVSGRRSKRGLVGRSLPPGGSANNINPRRISSGVSCGEYDYKVAAAAAARAARNENESIWPPTNAQHASPLLALPPLKLAGTHTRSSSNISMSTLTSGNGSHLSLDEIIATIKVNDPNSQISLKPPTSRRSTQTGAYLSSRESPRGGVDNSTESLPAGGSQYSPGRLHIPPIVINPALLGKDSQAILACSESQASPSHCSETTSPPPNTDGPVLPVRPPAVSSPIQSTYSFRSFSSNRMPRRIPPPCDPLSQLTKNEQKAVPQAAPLLESSEYSGGDSDYDGKQYSKACISETDSALEDDDDFGSGYENFSNAEDYLSSQDDFRERNDNNDNDDDDELDDDNLVESENDATMEQDSQSDDDTESAKEFTVANVSYSTLNKIPMNMTYRGTLPDLIPNYQRKQSKWMKLFKRHGQTGLGPSKNHPPTSHIYTQNDNALVQSKLHVRLKTTMRGILNDSSSSEPHQLSDDSEDSEEDYGSDRNSRSRSPGRRSGKKREKIRQNLRYRNSFNEDKPWKSHLDVGYVTERERKRYEGMWVSNRDTYLDLLPWWNNGNYDETREVPEDGLMLNLVVTDIWSRSNLPQDTLAQIYDMVDTRRDGTLDRNSFVVGMWLVDQSLYGRKLPRELDRRVWDSVDKYVINVNGSNKNPKHHHRTRKKLLKKELKLIKKESKSHNV</sequence>
<name>IRS4_EREGS</name>
<keyword id="KW-0443">Lipid metabolism</keyword>
<keyword id="KW-1185">Reference proteome</keyword>
<comment type="function">
    <text evidence="1">Positive regulator of phosphatidylinositol 4,5-bisphosphate turnover and negatively regulates signaling through the cell integrity pathway. Involved in rDNA silencing (By similarity).</text>
</comment>
<comment type="similarity">
    <text evidence="4">Belongs to the IRS4 family.</text>
</comment>
<protein>
    <recommendedName>
        <fullName>Increased rDNA silencing protein 4</fullName>
    </recommendedName>
</protein>
<reference key="1">
    <citation type="journal article" date="2004" name="Science">
        <title>The Ashbya gossypii genome as a tool for mapping the ancient Saccharomyces cerevisiae genome.</title>
        <authorList>
            <person name="Dietrich F.S."/>
            <person name="Voegeli S."/>
            <person name="Brachat S."/>
            <person name="Lerch A."/>
            <person name="Gates K."/>
            <person name="Steiner S."/>
            <person name="Mohr C."/>
            <person name="Poehlmann R."/>
            <person name="Luedi P."/>
            <person name="Choi S."/>
            <person name="Wing R.A."/>
            <person name="Flavier A."/>
            <person name="Gaffney T.D."/>
            <person name="Philippsen P."/>
        </authorList>
    </citation>
    <scope>NUCLEOTIDE SEQUENCE [LARGE SCALE GENOMIC DNA]</scope>
    <source>
        <strain>ATCC 10895 / CBS 109.51 / FGSC 9923 / NRRL Y-1056</strain>
    </source>
</reference>
<reference key="2">
    <citation type="journal article" date="2013" name="G3 (Bethesda)">
        <title>Genomes of Ashbya fungi isolated from insects reveal four mating-type loci, numerous translocations, lack of transposons, and distinct gene duplications.</title>
        <authorList>
            <person name="Dietrich F.S."/>
            <person name="Voegeli S."/>
            <person name="Kuo S."/>
            <person name="Philippsen P."/>
        </authorList>
    </citation>
    <scope>GENOME REANNOTATION</scope>
    <source>
        <strain>ATCC 10895 / CBS 109.51 / FGSC 9923 / NRRL Y-1056</strain>
    </source>
</reference>
<gene>
    <name type="primary">IRS4</name>
    <name type="ordered locus">AFR103W</name>
</gene>
<dbReference type="EMBL" id="AE016819">
    <property type="protein sequence ID" value="AAS53474.1"/>
    <property type="molecule type" value="Genomic_DNA"/>
</dbReference>
<dbReference type="RefSeq" id="NP_985650.1">
    <property type="nucleotide sequence ID" value="NM_211004.1"/>
</dbReference>
<dbReference type="STRING" id="284811.Q754G7"/>
<dbReference type="EnsemblFungi" id="AAS53474">
    <property type="protein sequence ID" value="AAS53474"/>
    <property type="gene ID" value="AGOS_AFR103W"/>
</dbReference>
<dbReference type="GeneID" id="4621893"/>
<dbReference type="KEGG" id="ago:AGOS_AFR103W"/>
<dbReference type="eggNOG" id="KOG0998">
    <property type="taxonomic scope" value="Eukaryota"/>
</dbReference>
<dbReference type="HOGENOM" id="CLU_373362_0_0_1"/>
<dbReference type="InParanoid" id="Q754G7"/>
<dbReference type="OMA" id="KHHHRTR"/>
<dbReference type="OrthoDB" id="10045710at2759"/>
<dbReference type="Proteomes" id="UP000000591">
    <property type="component" value="Chromosome VI"/>
</dbReference>
<dbReference type="GO" id="GO:0005737">
    <property type="term" value="C:cytoplasm"/>
    <property type="evidence" value="ECO:0000318"/>
    <property type="project" value="GO_Central"/>
</dbReference>
<dbReference type="GO" id="GO:0005886">
    <property type="term" value="C:plasma membrane"/>
    <property type="evidence" value="ECO:0000318"/>
    <property type="project" value="GO_Central"/>
</dbReference>
<dbReference type="GO" id="GO:0006629">
    <property type="term" value="P:lipid metabolic process"/>
    <property type="evidence" value="ECO:0007669"/>
    <property type="project" value="UniProtKB-KW"/>
</dbReference>
<dbReference type="CDD" id="cd00052">
    <property type="entry name" value="EH"/>
    <property type="match status" value="1"/>
</dbReference>
<dbReference type="FunFam" id="1.10.238.10:FF:000326">
    <property type="entry name" value="IRS4p EH domain-containing protein"/>
    <property type="match status" value="1"/>
</dbReference>
<dbReference type="Gene3D" id="1.10.238.10">
    <property type="entry name" value="EF-hand"/>
    <property type="match status" value="1"/>
</dbReference>
<dbReference type="InterPro" id="IPR011992">
    <property type="entry name" value="EF-hand-dom_pair"/>
</dbReference>
<dbReference type="InterPro" id="IPR000261">
    <property type="entry name" value="EH_dom"/>
</dbReference>
<dbReference type="Pfam" id="PF12763">
    <property type="entry name" value="EH"/>
    <property type="match status" value="1"/>
</dbReference>
<dbReference type="SMART" id="SM00027">
    <property type="entry name" value="EH"/>
    <property type="match status" value="1"/>
</dbReference>
<dbReference type="SUPFAM" id="SSF47473">
    <property type="entry name" value="EF-hand"/>
    <property type="match status" value="1"/>
</dbReference>
<dbReference type="PROSITE" id="PS50031">
    <property type="entry name" value="EH"/>
    <property type="match status" value="1"/>
</dbReference>
<evidence type="ECO:0000250" key="1"/>
<evidence type="ECO:0000255" key="2">
    <source>
        <dbReference type="PROSITE-ProRule" id="PRU00077"/>
    </source>
</evidence>
<evidence type="ECO:0000256" key="3">
    <source>
        <dbReference type="SAM" id="MobiDB-lite"/>
    </source>
</evidence>
<evidence type="ECO:0000305" key="4"/>
<accession>Q754G7</accession>